<protein>
    <recommendedName>
        <fullName evidence="1">N-acetyl-gamma-glutamyl-phosphate reductase</fullName>
        <shortName evidence="1">AGPR</shortName>
        <ecNumber evidence="1">1.2.1.38</ecNumber>
    </recommendedName>
    <alternativeName>
        <fullName evidence="1">N-acetyl-glutamate semialdehyde dehydrogenase</fullName>
        <shortName evidence="1">NAGSA dehydrogenase</shortName>
    </alternativeName>
</protein>
<sequence>MIRAGIIGATGYTGLELVRLLKNHPEAKITYLSSRTYAGKKLEEVFPSTLENSILSEFDPEKVSKNCDVLFTALPAGASYDLVRELKGVKIIDLGADFRFDDPGVYREWYGKELSGYENIKRVYGLPELHREEIKNAQVVGNPGCYPTSVILALAPALKHNLVDPETILVDAKSGVSGAGRKEKVDYLFSEVNESLRPYNVAKHRHVPEMEQELGKISGKKVNVVFTPHLVPMTRGILSTIYVKTDKSLEEIHEAYLEFYRNEPFVHVLPMGIYPSTKWCYGSNHVFIGMQMEERTNTLILMSAIDNLVKGASGQAVQNMNIMFGLDETKGLEFTPIYP</sequence>
<feature type="chain" id="PRO_1000096745" description="N-acetyl-gamma-glutamyl-phosphate reductase">
    <location>
        <begin position="1"/>
        <end position="339"/>
    </location>
</feature>
<feature type="active site" evidence="1">
    <location>
        <position position="145"/>
    </location>
</feature>
<evidence type="ECO:0000255" key="1">
    <source>
        <dbReference type="HAMAP-Rule" id="MF_00150"/>
    </source>
</evidence>
<name>ARGC_THESQ</name>
<keyword id="KW-0028">Amino-acid biosynthesis</keyword>
<keyword id="KW-0055">Arginine biosynthesis</keyword>
<keyword id="KW-0963">Cytoplasm</keyword>
<keyword id="KW-0521">NADP</keyword>
<keyword id="KW-0560">Oxidoreductase</keyword>
<organism>
    <name type="scientific">Thermotoga sp. (strain RQ2)</name>
    <dbReference type="NCBI Taxonomy" id="126740"/>
    <lineage>
        <taxon>Bacteria</taxon>
        <taxon>Thermotogati</taxon>
        <taxon>Thermotogota</taxon>
        <taxon>Thermotogae</taxon>
        <taxon>Thermotogales</taxon>
        <taxon>Thermotogaceae</taxon>
        <taxon>Thermotoga</taxon>
    </lineage>
</organism>
<dbReference type="EC" id="1.2.1.38" evidence="1"/>
<dbReference type="EMBL" id="CP000969">
    <property type="protein sequence ID" value="ACB09390.1"/>
    <property type="molecule type" value="Genomic_DNA"/>
</dbReference>
<dbReference type="RefSeq" id="WP_012310902.1">
    <property type="nucleotide sequence ID" value="NC_010483.1"/>
</dbReference>
<dbReference type="SMR" id="B1LAP2"/>
<dbReference type="KEGG" id="trq:TRQ2_1043"/>
<dbReference type="HOGENOM" id="CLU_006384_0_1_0"/>
<dbReference type="UniPathway" id="UPA00068">
    <property type="reaction ID" value="UER00108"/>
</dbReference>
<dbReference type="Proteomes" id="UP000001687">
    <property type="component" value="Chromosome"/>
</dbReference>
<dbReference type="GO" id="GO:0005737">
    <property type="term" value="C:cytoplasm"/>
    <property type="evidence" value="ECO:0007669"/>
    <property type="project" value="UniProtKB-SubCell"/>
</dbReference>
<dbReference type="GO" id="GO:0003942">
    <property type="term" value="F:N-acetyl-gamma-glutamyl-phosphate reductase activity"/>
    <property type="evidence" value="ECO:0007669"/>
    <property type="project" value="UniProtKB-UniRule"/>
</dbReference>
<dbReference type="GO" id="GO:0051287">
    <property type="term" value="F:NAD binding"/>
    <property type="evidence" value="ECO:0007669"/>
    <property type="project" value="InterPro"/>
</dbReference>
<dbReference type="GO" id="GO:0070401">
    <property type="term" value="F:NADP+ binding"/>
    <property type="evidence" value="ECO:0007669"/>
    <property type="project" value="InterPro"/>
</dbReference>
<dbReference type="GO" id="GO:0006526">
    <property type="term" value="P:L-arginine biosynthetic process"/>
    <property type="evidence" value="ECO:0007669"/>
    <property type="project" value="UniProtKB-UniRule"/>
</dbReference>
<dbReference type="CDD" id="cd23934">
    <property type="entry name" value="AGPR_1_C"/>
    <property type="match status" value="1"/>
</dbReference>
<dbReference type="CDD" id="cd17895">
    <property type="entry name" value="AGPR_1_N"/>
    <property type="match status" value="1"/>
</dbReference>
<dbReference type="FunFam" id="3.30.360.10:FF:000014">
    <property type="entry name" value="N-acetyl-gamma-glutamyl-phosphate reductase"/>
    <property type="match status" value="1"/>
</dbReference>
<dbReference type="Gene3D" id="3.30.360.10">
    <property type="entry name" value="Dihydrodipicolinate Reductase, domain 2"/>
    <property type="match status" value="1"/>
</dbReference>
<dbReference type="Gene3D" id="3.40.50.720">
    <property type="entry name" value="NAD(P)-binding Rossmann-like Domain"/>
    <property type="match status" value="1"/>
</dbReference>
<dbReference type="HAMAP" id="MF_00150">
    <property type="entry name" value="ArgC_type1"/>
    <property type="match status" value="1"/>
</dbReference>
<dbReference type="InterPro" id="IPR023013">
    <property type="entry name" value="AGPR_AS"/>
</dbReference>
<dbReference type="InterPro" id="IPR000706">
    <property type="entry name" value="AGPR_type-1"/>
</dbReference>
<dbReference type="InterPro" id="IPR036291">
    <property type="entry name" value="NAD(P)-bd_dom_sf"/>
</dbReference>
<dbReference type="InterPro" id="IPR050085">
    <property type="entry name" value="NAGSA_dehydrogenase"/>
</dbReference>
<dbReference type="InterPro" id="IPR000534">
    <property type="entry name" value="Semialdehyde_DH_NAD-bd"/>
</dbReference>
<dbReference type="NCBIfam" id="TIGR01850">
    <property type="entry name" value="argC"/>
    <property type="match status" value="1"/>
</dbReference>
<dbReference type="PANTHER" id="PTHR32338:SF10">
    <property type="entry name" value="N-ACETYL-GAMMA-GLUTAMYL-PHOSPHATE REDUCTASE, CHLOROPLASTIC-RELATED"/>
    <property type="match status" value="1"/>
</dbReference>
<dbReference type="PANTHER" id="PTHR32338">
    <property type="entry name" value="N-ACETYL-GAMMA-GLUTAMYL-PHOSPHATE REDUCTASE, CHLOROPLASTIC-RELATED-RELATED"/>
    <property type="match status" value="1"/>
</dbReference>
<dbReference type="Pfam" id="PF01118">
    <property type="entry name" value="Semialdhyde_dh"/>
    <property type="match status" value="1"/>
</dbReference>
<dbReference type="Pfam" id="PF22698">
    <property type="entry name" value="Semialdhyde_dhC_1"/>
    <property type="match status" value="1"/>
</dbReference>
<dbReference type="SMART" id="SM00859">
    <property type="entry name" value="Semialdhyde_dh"/>
    <property type="match status" value="1"/>
</dbReference>
<dbReference type="SUPFAM" id="SSF55347">
    <property type="entry name" value="Glyceraldehyde-3-phosphate dehydrogenase-like, C-terminal domain"/>
    <property type="match status" value="1"/>
</dbReference>
<dbReference type="SUPFAM" id="SSF51735">
    <property type="entry name" value="NAD(P)-binding Rossmann-fold domains"/>
    <property type="match status" value="1"/>
</dbReference>
<dbReference type="PROSITE" id="PS01224">
    <property type="entry name" value="ARGC"/>
    <property type="match status" value="1"/>
</dbReference>
<proteinExistence type="inferred from homology"/>
<accession>B1LAP2</accession>
<reference key="1">
    <citation type="journal article" date="2011" name="J. Bacteriol.">
        <title>Genome sequence of Thermotoga sp. strain RQ2, a hyperthermophilic bacterium isolated from a geothermally heated region of the seafloor near Ribeira Quente, the Azores.</title>
        <authorList>
            <person name="Swithers K.S."/>
            <person name="DiPippo J.L."/>
            <person name="Bruce D.C."/>
            <person name="Detter C."/>
            <person name="Tapia R."/>
            <person name="Han S."/>
            <person name="Saunders E."/>
            <person name="Goodwin L.A."/>
            <person name="Han J."/>
            <person name="Woyke T."/>
            <person name="Pitluck S."/>
            <person name="Pennacchio L."/>
            <person name="Nolan M."/>
            <person name="Mikhailova N."/>
            <person name="Lykidis A."/>
            <person name="Land M.L."/>
            <person name="Brettin T."/>
            <person name="Stetter K.O."/>
            <person name="Nelson K.E."/>
            <person name="Gogarten J.P."/>
            <person name="Noll K.M."/>
        </authorList>
    </citation>
    <scope>NUCLEOTIDE SEQUENCE [LARGE SCALE GENOMIC DNA]</scope>
    <source>
        <strain>RQ2</strain>
    </source>
</reference>
<comment type="function">
    <text evidence="1">Catalyzes the NADPH-dependent reduction of N-acetyl-5-glutamyl phosphate to yield N-acetyl-L-glutamate 5-semialdehyde.</text>
</comment>
<comment type="catalytic activity">
    <reaction evidence="1">
        <text>N-acetyl-L-glutamate 5-semialdehyde + phosphate + NADP(+) = N-acetyl-L-glutamyl 5-phosphate + NADPH + H(+)</text>
        <dbReference type="Rhea" id="RHEA:21588"/>
        <dbReference type="ChEBI" id="CHEBI:15378"/>
        <dbReference type="ChEBI" id="CHEBI:29123"/>
        <dbReference type="ChEBI" id="CHEBI:43474"/>
        <dbReference type="ChEBI" id="CHEBI:57783"/>
        <dbReference type="ChEBI" id="CHEBI:57936"/>
        <dbReference type="ChEBI" id="CHEBI:58349"/>
        <dbReference type="EC" id="1.2.1.38"/>
    </reaction>
</comment>
<comment type="pathway">
    <text evidence="1">Amino-acid biosynthesis; L-arginine biosynthesis; N(2)-acetyl-L-ornithine from L-glutamate: step 3/4.</text>
</comment>
<comment type="subcellular location">
    <subcellularLocation>
        <location evidence="1">Cytoplasm</location>
    </subcellularLocation>
</comment>
<comment type="similarity">
    <text evidence="1">Belongs to the NAGSA dehydrogenase family. Type 1 subfamily.</text>
</comment>
<gene>
    <name evidence="1" type="primary">argC</name>
    <name type="ordered locus">TRQ2_1043</name>
</gene>